<protein>
    <recommendedName>
        <fullName evidence="1">Probable GTP-binding protein EngB</fullName>
    </recommendedName>
</protein>
<keyword id="KW-0131">Cell cycle</keyword>
<keyword id="KW-0132">Cell division</keyword>
<keyword id="KW-0342">GTP-binding</keyword>
<keyword id="KW-0460">Magnesium</keyword>
<keyword id="KW-0479">Metal-binding</keyword>
<keyword id="KW-0547">Nucleotide-binding</keyword>
<keyword id="KW-1185">Reference proteome</keyword>
<keyword id="KW-0717">Septation</keyword>
<reference key="1">
    <citation type="journal article" date="2004" name="Proc. Natl. Acad. Sci. U.S.A.">
        <title>Genome sequence of the deep-sea gamma-proteobacterium Idiomarina loihiensis reveals amino acid fermentation as a source of carbon and energy.</title>
        <authorList>
            <person name="Hou S."/>
            <person name="Saw J.H."/>
            <person name="Lee K.S."/>
            <person name="Freitas T.A."/>
            <person name="Belisle C."/>
            <person name="Kawarabayasi Y."/>
            <person name="Donachie S.P."/>
            <person name="Pikina A."/>
            <person name="Galperin M.Y."/>
            <person name="Koonin E.V."/>
            <person name="Makarova K.S."/>
            <person name="Omelchenko M.V."/>
            <person name="Sorokin A."/>
            <person name="Wolf Y.I."/>
            <person name="Li Q.X."/>
            <person name="Keum Y.S."/>
            <person name="Campbell S."/>
            <person name="Denery J."/>
            <person name="Aizawa S."/>
            <person name="Shibata S."/>
            <person name="Malahoff A."/>
            <person name="Alam M."/>
        </authorList>
    </citation>
    <scope>NUCLEOTIDE SEQUENCE [LARGE SCALE GENOMIC DNA]</scope>
    <source>
        <strain>ATCC BAA-735 / DSM 15497 / L2-TR</strain>
    </source>
</reference>
<proteinExistence type="inferred from homology"/>
<accession>Q5QXJ0</accession>
<gene>
    <name evidence="1" type="primary">engB</name>
    <name type="ordered locus">IL0027</name>
</gene>
<dbReference type="EMBL" id="AE017340">
    <property type="protein sequence ID" value="AAV80871.1"/>
    <property type="molecule type" value="Genomic_DNA"/>
</dbReference>
<dbReference type="SMR" id="Q5QXJ0"/>
<dbReference type="STRING" id="283942.IL0027"/>
<dbReference type="GeneID" id="41335175"/>
<dbReference type="KEGG" id="ilo:IL0027"/>
<dbReference type="eggNOG" id="COG0218">
    <property type="taxonomic scope" value="Bacteria"/>
</dbReference>
<dbReference type="HOGENOM" id="CLU_033732_1_0_6"/>
<dbReference type="OrthoDB" id="9804921at2"/>
<dbReference type="Proteomes" id="UP000001171">
    <property type="component" value="Chromosome"/>
</dbReference>
<dbReference type="GO" id="GO:0005829">
    <property type="term" value="C:cytosol"/>
    <property type="evidence" value="ECO:0007669"/>
    <property type="project" value="TreeGrafter"/>
</dbReference>
<dbReference type="GO" id="GO:0005525">
    <property type="term" value="F:GTP binding"/>
    <property type="evidence" value="ECO:0007669"/>
    <property type="project" value="UniProtKB-UniRule"/>
</dbReference>
<dbReference type="GO" id="GO:0046872">
    <property type="term" value="F:metal ion binding"/>
    <property type="evidence" value="ECO:0007669"/>
    <property type="project" value="UniProtKB-KW"/>
</dbReference>
<dbReference type="GO" id="GO:0000917">
    <property type="term" value="P:division septum assembly"/>
    <property type="evidence" value="ECO:0007669"/>
    <property type="project" value="UniProtKB-KW"/>
</dbReference>
<dbReference type="CDD" id="cd01876">
    <property type="entry name" value="YihA_EngB"/>
    <property type="match status" value="1"/>
</dbReference>
<dbReference type="FunFam" id="3.40.50.300:FF:000098">
    <property type="entry name" value="Probable GTP-binding protein EngB"/>
    <property type="match status" value="1"/>
</dbReference>
<dbReference type="Gene3D" id="3.40.50.300">
    <property type="entry name" value="P-loop containing nucleotide triphosphate hydrolases"/>
    <property type="match status" value="1"/>
</dbReference>
<dbReference type="HAMAP" id="MF_00321">
    <property type="entry name" value="GTPase_EngB"/>
    <property type="match status" value="1"/>
</dbReference>
<dbReference type="InterPro" id="IPR030393">
    <property type="entry name" value="G_ENGB_dom"/>
</dbReference>
<dbReference type="InterPro" id="IPR006073">
    <property type="entry name" value="GTP-bd"/>
</dbReference>
<dbReference type="InterPro" id="IPR019987">
    <property type="entry name" value="GTP-bd_ribosome_bio_YsxC"/>
</dbReference>
<dbReference type="InterPro" id="IPR027417">
    <property type="entry name" value="P-loop_NTPase"/>
</dbReference>
<dbReference type="NCBIfam" id="TIGR03598">
    <property type="entry name" value="GTPase_YsxC"/>
    <property type="match status" value="1"/>
</dbReference>
<dbReference type="PANTHER" id="PTHR11649:SF13">
    <property type="entry name" value="ENGB-TYPE G DOMAIN-CONTAINING PROTEIN"/>
    <property type="match status" value="1"/>
</dbReference>
<dbReference type="PANTHER" id="PTHR11649">
    <property type="entry name" value="MSS1/TRME-RELATED GTP-BINDING PROTEIN"/>
    <property type="match status" value="1"/>
</dbReference>
<dbReference type="Pfam" id="PF01926">
    <property type="entry name" value="MMR_HSR1"/>
    <property type="match status" value="1"/>
</dbReference>
<dbReference type="SUPFAM" id="SSF52540">
    <property type="entry name" value="P-loop containing nucleoside triphosphate hydrolases"/>
    <property type="match status" value="1"/>
</dbReference>
<dbReference type="PROSITE" id="PS51706">
    <property type="entry name" value="G_ENGB"/>
    <property type="match status" value="1"/>
</dbReference>
<comment type="function">
    <text evidence="1">Necessary for normal cell division and for the maintenance of normal septation.</text>
</comment>
<comment type="cofactor">
    <cofactor evidence="1">
        <name>Mg(2+)</name>
        <dbReference type="ChEBI" id="CHEBI:18420"/>
    </cofactor>
</comment>
<comment type="similarity">
    <text evidence="1">Belongs to the TRAFAC class TrmE-Era-EngA-EngB-Septin-like GTPase superfamily. EngB GTPase family.</text>
</comment>
<feature type="chain" id="PRO_0000266877" description="Probable GTP-binding protein EngB">
    <location>
        <begin position="1"/>
        <end position="206"/>
    </location>
</feature>
<feature type="domain" description="EngB-type G" evidence="1">
    <location>
        <begin position="27"/>
        <end position="201"/>
    </location>
</feature>
<feature type="binding site" evidence="1">
    <location>
        <begin position="35"/>
        <end position="42"/>
    </location>
    <ligand>
        <name>GTP</name>
        <dbReference type="ChEBI" id="CHEBI:37565"/>
    </ligand>
</feature>
<feature type="binding site" evidence="1">
    <location>
        <position position="42"/>
    </location>
    <ligand>
        <name>Mg(2+)</name>
        <dbReference type="ChEBI" id="CHEBI:18420"/>
    </ligand>
</feature>
<feature type="binding site" evidence="1">
    <location>
        <begin position="62"/>
        <end position="66"/>
    </location>
    <ligand>
        <name>GTP</name>
        <dbReference type="ChEBI" id="CHEBI:37565"/>
    </ligand>
</feature>
<feature type="binding site" evidence="1">
    <location>
        <position position="64"/>
    </location>
    <ligand>
        <name>Mg(2+)</name>
        <dbReference type="ChEBI" id="CHEBI:18420"/>
    </ligand>
</feature>
<feature type="binding site" evidence="1">
    <location>
        <begin position="80"/>
        <end position="83"/>
    </location>
    <ligand>
        <name>GTP</name>
        <dbReference type="ChEBI" id="CHEBI:37565"/>
    </ligand>
</feature>
<feature type="binding site" evidence="1">
    <location>
        <begin position="147"/>
        <end position="150"/>
    </location>
    <ligand>
        <name>GTP</name>
        <dbReference type="ChEBI" id="CHEBI:37565"/>
    </ligand>
</feature>
<feature type="binding site" evidence="1">
    <location>
        <begin position="180"/>
        <end position="182"/>
    </location>
    <ligand>
        <name>GTP</name>
        <dbReference type="ChEBI" id="CHEBI:37565"/>
    </ligand>
</feature>
<organism>
    <name type="scientific">Idiomarina loihiensis (strain ATCC BAA-735 / DSM 15497 / L2-TR)</name>
    <dbReference type="NCBI Taxonomy" id="283942"/>
    <lineage>
        <taxon>Bacteria</taxon>
        <taxon>Pseudomonadati</taxon>
        <taxon>Pseudomonadota</taxon>
        <taxon>Gammaproteobacteria</taxon>
        <taxon>Alteromonadales</taxon>
        <taxon>Idiomarinaceae</taxon>
        <taxon>Idiomarina</taxon>
    </lineage>
</organism>
<sequence>MADQQLDYASAKFVTSAPDISKLPPDSGIEVAFAGRSNAGKSSALNTLTRQKALARTSKTPGRTQLINVFELTTGQRLIDLPGYGFAKVPLAVKEKWQRSLSEYLQQRDSLKGIVVLMDIRHPFRETDQELIYWAVDCDLPVLALLTKADKLKQGARKSTVLKAKQAAIAFNGDVQVEAFSSLKRIGVEQVEEKLNQWYSKEYDDE</sequence>
<name>ENGB_IDILO</name>
<evidence type="ECO:0000255" key="1">
    <source>
        <dbReference type="HAMAP-Rule" id="MF_00321"/>
    </source>
</evidence>